<name>YRAN_SALSV</name>
<accession>B4TWB9</accession>
<protein>
    <recommendedName>
        <fullName evidence="1">UPF0102 protein YraN</fullName>
    </recommendedName>
</protein>
<sequence length="131" mass="14903">MAQIPARGDCSRQLTRKQAGDAWEAAARRWLESKGLRFIAANVRERGGEIDLIMRDGKTTVFVEVRYRRSGLYGGAAASVTRSKQHKLLHTARLWLARQNGSFDTVDCRFDVLAFTGNEIEWFRDAFNDHS</sequence>
<evidence type="ECO:0000255" key="1">
    <source>
        <dbReference type="HAMAP-Rule" id="MF_00048"/>
    </source>
</evidence>
<comment type="similarity">
    <text evidence="1">Belongs to the UPF0102 family.</text>
</comment>
<gene>
    <name evidence="1" type="primary">yraN</name>
    <name type="ordered locus">SeSA_A3454</name>
</gene>
<dbReference type="EMBL" id="CP001127">
    <property type="protein sequence ID" value="ACF90758.1"/>
    <property type="molecule type" value="Genomic_DNA"/>
</dbReference>
<dbReference type="RefSeq" id="WP_000057285.1">
    <property type="nucleotide sequence ID" value="NC_011094.1"/>
</dbReference>
<dbReference type="SMR" id="B4TWB9"/>
<dbReference type="KEGG" id="sew:SeSA_A3454"/>
<dbReference type="HOGENOM" id="CLU_115353_1_0_6"/>
<dbReference type="Proteomes" id="UP000001865">
    <property type="component" value="Chromosome"/>
</dbReference>
<dbReference type="GO" id="GO:0003676">
    <property type="term" value="F:nucleic acid binding"/>
    <property type="evidence" value="ECO:0007669"/>
    <property type="project" value="InterPro"/>
</dbReference>
<dbReference type="CDD" id="cd20736">
    <property type="entry name" value="PoNe_Nuclease"/>
    <property type="match status" value="1"/>
</dbReference>
<dbReference type="Gene3D" id="3.40.1350.10">
    <property type="match status" value="1"/>
</dbReference>
<dbReference type="HAMAP" id="MF_00048">
    <property type="entry name" value="UPF0102"/>
    <property type="match status" value="1"/>
</dbReference>
<dbReference type="InterPro" id="IPR011335">
    <property type="entry name" value="Restrct_endonuc-II-like"/>
</dbReference>
<dbReference type="InterPro" id="IPR011856">
    <property type="entry name" value="tRNA_endonuc-like_dom_sf"/>
</dbReference>
<dbReference type="InterPro" id="IPR003509">
    <property type="entry name" value="UPF0102_YraN-like"/>
</dbReference>
<dbReference type="NCBIfam" id="NF009150">
    <property type="entry name" value="PRK12497.1-3"/>
    <property type="match status" value="1"/>
</dbReference>
<dbReference type="NCBIfam" id="TIGR00252">
    <property type="entry name" value="YraN family protein"/>
    <property type="match status" value="1"/>
</dbReference>
<dbReference type="PANTHER" id="PTHR34039">
    <property type="entry name" value="UPF0102 PROTEIN YRAN"/>
    <property type="match status" value="1"/>
</dbReference>
<dbReference type="PANTHER" id="PTHR34039:SF1">
    <property type="entry name" value="UPF0102 PROTEIN YRAN"/>
    <property type="match status" value="1"/>
</dbReference>
<dbReference type="Pfam" id="PF02021">
    <property type="entry name" value="UPF0102"/>
    <property type="match status" value="1"/>
</dbReference>
<dbReference type="SUPFAM" id="SSF52980">
    <property type="entry name" value="Restriction endonuclease-like"/>
    <property type="match status" value="1"/>
</dbReference>
<feature type="chain" id="PRO_1000091264" description="UPF0102 protein YraN">
    <location>
        <begin position="1"/>
        <end position="131"/>
    </location>
</feature>
<proteinExistence type="inferred from homology"/>
<organism>
    <name type="scientific">Salmonella schwarzengrund (strain CVM19633)</name>
    <dbReference type="NCBI Taxonomy" id="439843"/>
    <lineage>
        <taxon>Bacteria</taxon>
        <taxon>Pseudomonadati</taxon>
        <taxon>Pseudomonadota</taxon>
        <taxon>Gammaproteobacteria</taxon>
        <taxon>Enterobacterales</taxon>
        <taxon>Enterobacteriaceae</taxon>
        <taxon>Salmonella</taxon>
    </lineage>
</organism>
<reference key="1">
    <citation type="journal article" date="2011" name="J. Bacteriol.">
        <title>Comparative genomics of 28 Salmonella enterica isolates: evidence for CRISPR-mediated adaptive sublineage evolution.</title>
        <authorList>
            <person name="Fricke W.F."/>
            <person name="Mammel M.K."/>
            <person name="McDermott P.F."/>
            <person name="Tartera C."/>
            <person name="White D.G."/>
            <person name="Leclerc J.E."/>
            <person name="Ravel J."/>
            <person name="Cebula T.A."/>
        </authorList>
    </citation>
    <scope>NUCLEOTIDE SEQUENCE [LARGE SCALE GENOMIC DNA]</scope>
    <source>
        <strain>CVM19633</strain>
    </source>
</reference>